<evidence type="ECO:0000255" key="1">
    <source>
        <dbReference type="HAMAP-Rule" id="MF_01218"/>
    </source>
</evidence>
<comment type="function">
    <text evidence="1">Catalyzes the conversion of uracil and 5-phospho-alpha-D-ribose 1-diphosphate (PRPP) to UMP and diphosphate.</text>
</comment>
<comment type="catalytic activity">
    <reaction evidence="1">
        <text>UMP + diphosphate = 5-phospho-alpha-D-ribose 1-diphosphate + uracil</text>
        <dbReference type="Rhea" id="RHEA:13017"/>
        <dbReference type="ChEBI" id="CHEBI:17568"/>
        <dbReference type="ChEBI" id="CHEBI:33019"/>
        <dbReference type="ChEBI" id="CHEBI:57865"/>
        <dbReference type="ChEBI" id="CHEBI:58017"/>
        <dbReference type="EC" id="2.4.2.9"/>
    </reaction>
</comment>
<comment type="cofactor">
    <cofactor evidence="1">
        <name>Mg(2+)</name>
        <dbReference type="ChEBI" id="CHEBI:18420"/>
    </cofactor>
    <text evidence="1">Binds 1 Mg(2+) ion per subunit. The magnesium is bound as Mg-PRPP.</text>
</comment>
<comment type="activity regulation">
    <text evidence="1">Allosterically activated by GTP.</text>
</comment>
<comment type="pathway">
    <text evidence="1">Pyrimidine metabolism; UMP biosynthesis via salvage pathway; UMP from uracil: step 1/1.</text>
</comment>
<comment type="similarity">
    <text evidence="1">Belongs to the UPRTase family.</text>
</comment>
<dbReference type="EC" id="2.4.2.9" evidence="1"/>
<dbReference type="EMBL" id="BA000023">
    <property type="protein sequence ID" value="BAK54222.1"/>
    <property type="molecule type" value="Genomic_DNA"/>
</dbReference>
<dbReference type="RefSeq" id="WP_010978234.1">
    <property type="nucleotide sequence ID" value="NC_003106.2"/>
</dbReference>
<dbReference type="SMR" id="Q975Z7"/>
<dbReference type="STRING" id="273063.STK_02810"/>
<dbReference type="GeneID" id="95643640"/>
<dbReference type="KEGG" id="sto:STK_02810"/>
<dbReference type="PATRIC" id="fig|273063.9.peg.335"/>
<dbReference type="eggNOG" id="arCOG04128">
    <property type="taxonomic scope" value="Archaea"/>
</dbReference>
<dbReference type="OrthoDB" id="80352at2157"/>
<dbReference type="UniPathway" id="UPA00574">
    <property type="reaction ID" value="UER00636"/>
</dbReference>
<dbReference type="Proteomes" id="UP000001015">
    <property type="component" value="Chromosome"/>
</dbReference>
<dbReference type="GO" id="GO:0005525">
    <property type="term" value="F:GTP binding"/>
    <property type="evidence" value="ECO:0007669"/>
    <property type="project" value="UniProtKB-KW"/>
</dbReference>
<dbReference type="GO" id="GO:0000287">
    <property type="term" value="F:magnesium ion binding"/>
    <property type="evidence" value="ECO:0007669"/>
    <property type="project" value="UniProtKB-UniRule"/>
</dbReference>
<dbReference type="GO" id="GO:0004845">
    <property type="term" value="F:uracil phosphoribosyltransferase activity"/>
    <property type="evidence" value="ECO:0007669"/>
    <property type="project" value="UniProtKB-UniRule"/>
</dbReference>
<dbReference type="GO" id="GO:0044206">
    <property type="term" value="P:UMP salvage"/>
    <property type="evidence" value="ECO:0007669"/>
    <property type="project" value="UniProtKB-UniRule"/>
</dbReference>
<dbReference type="GO" id="GO:0006223">
    <property type="term" value="P:uracil salvage"/>
    <property type="evidence" value="ECO:0007669"/>
    <property type="project" value="InterPro"/>
</dbReference>
<dbReference type="CDD" id="cd06223">
    <property type="entry name" value="PRTases_typeI"/>
    <property type="match status" value="1"/>
</dbReference>
<dbReference type="FunFam" id="3.40.50.2020:FF:000023">
    <property type="entry name" value="Probable uracil phosphoribosyltransferase"/>
    <property type="match status" value="1"/>
</dbReference>
<dbReference type="Gene3D" id="3.40.50.2020">
    <property type="match status" value="1"/>
</dbReference>
<dbReference type="HAMAP" id="MF_01218_A">
    <property type="entry name" value="Upp_A"/>
    <property type="match status" value="1"/>
</dbReference>
<dbReference type="InterPro" id="IPR000836">
    <property type="entry name" value="PRibTrfase_dom"/>
</dbReference>
<dbReference type="InterPro" id="IPR029057">
    <property type="entry name" value="PRTase-like"/>
</dbReference>
<dbReference type="InterPro" id="IPR034331">
    <property type="entry name" value="Upp_A"/>
</dbReference>
<dbReference type="InterPro" id="IPR005765">
    <property type="entry name" value="Ura_phspho_trans"/>
</dbReference>
<dbReference type="NCBIfam" id="NF001097">
    <property type="entry name" value="PRK00129.1"/>
    <property type="match status" value="1"/>
</dbReference>
<dbReference type="NCBIfam" id="TIGR01091">
    <property type="entry name" value="upp"/>
    <property type="match status" value="1"/>
</dbReference>
<dbReference type="Pfam" id="PF14681">
    <property type="entry name" value="UPRTase"/>
    <property type="match status" value="1"/>
</dbReference>
<dbReference type="SUPFAM" id="SSF53271">
    <property type="entry name" value="PRTase-like"/>
    <property type="match status" value="1"/>
</dbReference>
<feature type="chain" id="PRO_0000120928" description="Uracil phosphoribosyltransferase">
    <location>
        <begin position="1"/>
        <end position="216"/>
    </location>
</feature>
<feature type="binding site" evidence="1">
    <location>
        <begin position="30"/>
        <end position="34"/>
    </location>
    <ligand>
        <name>GTP</name>
        <dbReference type="ChEBI" id="CHEBI:37565"/>
    </ligand>
</feature>
<feature type="binding site" evidence="1">
    <location>
        <position position="80"/>
    </location>
    <ligand>
        <name>5-phospho-alpha-D-ribose 1-diphosphate</name>
        <dbReference type="ChEBI" id="CHEBI:58017"/>
    </ligand>
</feature>
<feature type="binding site" evidence="1">
    <location>
        <position position="105"/>
    </location>
    <ligand>
        <name>5-phospho-alpha-D-ribose 1-diphosphate</name>
        <dbReference type="ChEBI" id="CHEBI:58017"/>
    </ligand>
</feature>
<feature type="binding site" evidence="1">
    <location>
        <begin position="140"/>
        <end position="148"/>
    </location>
    <ligand>
        <name>5-phospho-alpha-D-ribose 1-diphosphate</name>
        <dbReference type="ChEBI" id="CHEBI:58017"/>
    </ligand>
</feature>
<feature type="binding site" evidence="1">
    <location>
        <position position="203"/>
    </location>
    <ligand>
        <name>uracil</name>
        <dbReference type="ChEBI" id="CHEBI:17568"/>
    </ligand>
</feature>
<feature type="binding site" evidence="1">
    <location>
        <begin position="208"/>
        <end position="210"/>
    </location>
    <ligand>
        <name>uracil</name>
        <dbReference type="ChEBI" id="CHEBI:17568"/>
    </ligand>
</feature>
<feature type="binding site" evidence="1">
    <location>
        <position position="209"/>
    </location>
    <ligand>
        <name>5-phospho-alpha-D-ribose 1-diphosphate</name>
        <dbReference type="ChEBI" id="CHEBI:58017"/>
    </ligand>
</feature>
<protein>
    <recommendedName>
        <fullName evidence="1">Uracil phosphoribosyltransferase</fullName>
        <ecNumber evidence="1">2.4.2.9</ecNumber>
    </recommendedName>
    <alternativeName>
        <fullName evidence="1">UMP pyrophosphorylase</fullName>
    </alternativeName>
    <alternativeName>
        <fullName evidence="1">UPRTase</fullName>
    </alternativeName>
</protein>
<proteinExistence type="inferred from homology"/>
<reference key="1">
    <citation type="journal article" date="2001" name="DNA Res.">
        <title>Complete genome sequence of an aerobic thermoacidophilic Crenarchaeon, Sulfolobus tokodaii strain7.</title>
        <authorList>
            <person name="Kawarabayasi Y."/>
            <person name="Hino Y."/>
            <person name="Horikawa H."/>
            <person name="Jin-no K."/>
            <person name="Takahashi M."/>
            <person name="Sekine M."/>
            <person name="Baba S."/>
            <person name="Ankai A."/>
            <person name="Kosugi H."/>
            <person name="Hosoyama A."/>
            <person name="Fukui S."/>
            <person name="Nagai Y."/>
            <person name="Nishijima K."/>
            <person name="Otsuka R."/>
            <person name="Nakazawa H."/>
            <person name="Takamiya M."/>
            <person name="Kato Y."/>
            <person name="Yoshizawa T."/>
            <person name="Tanaka T."/>
            <person name="Kudoh Y."/>
            <person name="Yamazaki J."/>
            <person name="Kushida N."/>
            <person name="Oguchi A."/>
            <person name="Aoki K."/>
            <person name="Masuda S."/>
            <person name="Yanagii M."/>
            <person name="Nishimura M."/>
            <person name="Yamagishi A."/>
            <person name="Oshima T."/>
            <person name="Kikuchi H."/>
        </authorList>
    </citation>
    <scope>NUCLEOTIDE SEQUENCE [LARGE SCALE GENOMIC DNA]</scope>
    <source>
        <strain>DSM 16993 / JCM 10545 / NBRC 100140 / 7</strain>
    </source>
</reference>
<sequence length="216" mass="24182">MPLFVLSKPITLHFLTQLRSKNTDQITFRKTLVRLGRIIGYEILNMLDYNIIEVETPLGVKAKGVYIYDLENIVIISILRAATPLVEGLLKALPTARLGVIAASRKETQVNLGYPKEMEVEIFYNKIPEINIKDNVIIADPMIATASTMLKALNIIKDKKPKRIFIVSIIISEYGLKRILESYPDVNIITVSIDPELDNRGYILPGLGDAGDRAFG</sequence>
<name>UPP_SULTO</name>
<organism>
    <name type="scientific">Sulfurisphaera tokodaii (strain DSM 16993 / JCM 10545 / NBRC 100140 / 7)</name>
    <name type="common">Sulfolobus tokodaii</name>
    <dbReference type="NCBI Taxonomy" id="273063"/>
    <lineage>
        <taxon>Archaea</taxon>
        <taxon>Thermoproteota</taxon>
        <taxon>Thermoprotei</taxon>
        <taxon>Sulfolobales</taxon>
        <taxon>Sulfolobaceae</taxon>
        <taxon>Sulfurisphaera</taxon>
    </lineage>
</organism>
<gene>
    <name evidence="1" type="primary">upp</name>
    <name type="ordered locus">STK_02810</name>
</gene>
<keyword id="KW-0021">Allosteric enzyme</keyword>
<keyword id="KW-0328">Glycosyltransferase</keyword>
<keyword id="KW-0342">GTP-binding</keyword>
<keyword id="KW-0460">Magnesium</keyword>
<keyword id="KW-0547">Nucleotide-binding</keyword>
<keyword id="KW-1185">Reference proteome</keyword>
<keyword id="KW-0808">Transferase</keyword>
<accession>Q975Z7</accession>
<accession>F9VMS6</accession>